<name>UPPP_PROM3</name>
<reference key="1">
    <citation type="journal article" date="2007" name="PLoS Genet.">
        <title>Patterns and implications of gene gain and loss in the evolution of Prochlorococcus.</title>
        <authorList>
            <person name="Kettler G.C."/>
            <person name="Martiny A.C."/>
            <person name="Huang K."/>
            <person name="Zucker J."/>
            <person name="Coleman M.L."/>
            <person name="Rodrigue S."/>
            <person name="Chen F."/>
            <person name="Lapidus A."/>
            <person name="Ferriera S."/>
            <person name="Johnson J."/>
            <person name="Steglich C."/>
            <person name="Church G.M."/>
            <person name="Richardson P."/>
            <person name="Chisholm S.W."/>
        </authorList>
    </citation>
    <scope>NUCLEOTIDE SEQUENCE [LARGE SCALE GENOMIC DNA]</scope>
    <source>
        <strain>MIT 9303</strain>
    </source>
</reference>
<gene>
    <name evidence="1" type="primary">uppP</name>
    <name type="synonym">bacA</name>
    <name type="ordered locus">P9303_02211</name>
</gene>
<evidence type="ECO:0000255" key="1">
    <source>
        <dbReference type="HAMAP-Rule" id="MF_01006"/>
    </source>
</evidence>
<organism>
    <name type="scientific">Prochlorococcus marinus (strain MIT 9303)</name>
    <dbReference type="NCBI Taxonomy" id="59922"/>
    <lineage>
        <taxon>Bacteria</taxon>
        <taxon>Bacillati</taxon>
        <taxon>Cyanobacteriota</taxon>
        <taxon>Cyanophyceae</taxon>
        <taxon>Synechococcales</taxon>
        <taxon>Prochlorococcaceae</taxon>
        <taxon>Prochlorococcus</taxon>
    </lineage>
</organism>
<accession>A2C666</accession>
<dbReference type="EC" id="3.6.1.27" evidence="1"/>
<dbReference type="EMBL" id="CP000554">
    <property type="protein sequence ID" value="ABM76976.1"/>
    <property type="molecule type" value="Genomic_DNA"/>
</dbReference>
<dbReference type="RefSeq" id="WP_011824904.1">
    <property type="nucleotide sequence ID" value="NC_008820.1"/>
</dbReference>
<dbReference type="SMR" id="A2C666"/>
<dbReference type="STRING" id="59922.P9303_02211"/>
<dbReference type="KEGG" id="pmf:P9303_02211"/>
<dbReference type="HOGENOM" id="CLU_060296_1_0_3"/>
<dbReference type="Proteomes" id="UP000002274">
    <property type="component" value="Chromosome"/>
</dbReference>
<dbReference type="GO" id="GO:0005886">
    <property type="term" value="C:plasma membrane"/>
    <property type="evidence" value="ECO:0007669"/>
    <property type="project" value="UniProtKB-SubCell"/>
</dbReference>
<dbReference type="GO" id="GO:0050380">
    <property type="term" value="F:undecaprenyl-diphosphatase activity"/>
    <property type="evidence" value="ECO:0007669"/>
    <property type="project" value="UniProtKB-UniRule"/>
</dbReference>
<dbReference type="GO" id="GO:0071555">
    <property type="term" value="P:cell wall organization"/>
    <property type="evidence" value="ECO:0007669"/>
    <property type="project" value="UniProtKB-KW"/>
</dbReference>
<dbReference type="GO" id="GO:0009252">
    <property type="term" value="P:peptidoglycan biosynthetic process"/>
    <property type="evidence" value="ECO:0007669"/>
    <property type="project" value="UniProtKB-KW"/>
</dbReference>
<dbReference type="GO" id="GO:0008360">
    <property type="term" value="P:regulation of cell shape"/>
    <property type="evidence" value="ECO:0007669"/>
    <property type="project" value="UniProtKB-KW"/>
</dbReference>
<dbReference type="GO" id="GO:0046677">
    <property type="term" value="P:response to antibiotic"/>
    <property type="evidence" value="ECO:0007669"/>
    <property type="project" value="UniProtKB-UniRule"/>
</dbReference>
<dbReference type="HAMAP" id="MF_01006">
    <property type="entry name" value="Undec_diphosphatase"/>
    <property type="match status" value="1"/>
</dbReference>
<dbReference type="InterPro" id="IPR003824">
    <property type="entry name" value="UppP"/>
</dbReference>
<dbReference type="NCBIfam" id="NF001394">
    <property type="entry name" value="PRK00281.2-5"/>
    <property type="match status" value="1"/>
</dbReference>
<dbReference type="NCBIfam" id="TIGR00753">
    <property type="entry name" value="undec_PP_bacA"/>
    <property type="match status" value="1"/>
</dbReference>
<dbReference type="PANTHER" id="PTHR30622">
    <property type="entry name" value="UNDECAPRENYL-DIPHOSPHATASE"/>
    <property type="match status" value="1"/>
</dbReference>
<dbReference type="PANTHER" id="PTHR30622:SF4">
    <property type="entry name" value="UNDECAPRENYL-DIPHOSPHATASE"/>
    <property type="match status" value="1"/>
</dbReference>
<dbReference type="Pfam" id="PF02673">
    <property type="entry name" value="BacA"/>
    <property type="match status" value="1"/>
</dbReference>
<comment type="function">
    <text evidence="1">Catalyzes the dephosphorylation of undecaprenyl diphosphate (UPP). Confers resistance to bacitracin.</text>
</comment>
<comment type="catalytic activity">
    <reaction evidence="1">
        <text>di-trans,octa-cis-undecaprenyl diphosphate + H2O = di-trans,octa-cis-undecaprenyl phosphate + phosphate + H(+)</text>
        <dbReference type="Rhea" id="RHEA:28094"/>
        <dbReference type="ChEBI" id="CHEBI:15377"/>
        <dbReference type="ChEBI" id="CHEBI:15378"/>
        <dbReference type="ChEBI" id="CHEBI:43474"/>
        <dbReference type="ChEBI" id="CHEBI:58405"/>
        <dbReference type="ChEBI" id="CHEBI:60392"/>
        <dbReference type="EC" id="3.6.1.27"/>
    </reaction>
</comment>
<comment type="subcellular location">
    <subcellularLocation>
        <location evidence="1">Cell inner membrane</location>
        <topology evidence="1">Multi-pass membrane protein</topology>
    </subcellularLocation>
</comment>
<comment type="miscellaneous">
    <text>Bacitracin is thought to be involved in the inhibition of peptidoglycan synthesis by sequestering undecaprenyl diphosphate, thereby reducing the pool of lipid carrier available.</text>
</comment>
<comment type="similarity">
    <text evidence="1">Belongs to the UppP family.</text>
</comment>
<sequence length="293" mass="31570">MGPLFSSMILLASTSELLAACWRNLVLGVVQGLTEFLPISSTAHLKVVPMLVGWGDPGVSATAVIQLGSILAVIVYFKRDLAEVLKGIALAFKHGQWREPKARLGLAIAIGTMPILLAGMAIKLFWPGYEASSIRSLPSIAVVSIVMALLLALAERIGPRLKQMHLVKGRDGFVVGLAQALALIPGVSRSGSTLTASLFDGWQRQDAARFSFLLGIPAITLAGLVELKDAFAELSLEGVLPLLVGIVSAAFVSWLAIDWLLKYLQRHSTWIFVAYRLLFGVLVLAWWLSDTSN</sequence>
<feature type="chain" id="PRO_0000290747" description="Undecaprenyl-diphosphatase">
    <location>
        <begin position="1"/>
        <end position="293"/>
    </location>
</feature>
<feature type="transmembrane region" description="Helical" evidence="1">
    <location>
        <begin position="57"/>
        <end position="77"/>
    </location>
</feature>
<feature type="transmembrane region" description="Helical" evidence="1">
    <location>
        <begin position="106"/>
        <end position="126"/>
    </location>
</feature>
<feature type="transmembrane region" description="Helical" evidence="1">
    <location>
        <begin position="134"/>
        <end position="154"/>
    </location>
</feature>
<feature type="transmembrane region" description="Helical" evidence="1">
    <location>
        <begin position="172"/>
        <end position="192"/>
    </location>
</feature>
<feature type="transmembrane region" description="Helical" evidence="1">
    <location>
        <begin position="212"/>
        <end position="232"/>
    </location>
</feature>
<feature type="transmembrane region" description="Helical" evidence="1">
    <location>
        <begin position="239"/>
        <end position="259"/>
    </location>
</feature>
<feature type="transmembrane region" description="Helical" evidence="1">
    <location>
        <begin position="268"/>
        <end position="288"/>
    </location>
</feature>
<protein>
    <recommendedName>
        <fullName evidence="1">Undecaprenyl-diphosphatase</fullName>
        <ecNumber evidence="1">3.6.1.27</ecNumber>
    </recommendedName>
    <alternativeName>
        <fullName evidence="1">Bacitracin resistance protein</fullName>
    </alternativeName>
    <alternativeName>
        <fullName evidence="1">Undecaprenyl pyrophosphate phosphatase</fullName>
    </alternativeName>
</protein>
<keyword id="KW-0046">Antibiotic resistance</keyword>
<keyword id="KW-0997">Cell inner membrane</keyword>
<keyword id="KW-1003">Cell membrane</keyword>
<keyword id="KW-0133">Cell shape</keyword>
<keyword id="KW-0961">Cell wall biogenesis/degradation</keyword>
<keyword id="KW-0378">Hydrolase</keyword>
<keyword id="KW-0472">Membrane</keyword>
<keyword id="KW-0573">Peptidoglycan synthesis</keyword>
<keyword id="KW-0812">Transmembrane</keyword>
<keyword id="KW-1133">Transmembrane helix</keyword>
<proteinExistence type="inferred from homology"/>